<keyword id="KW-0051">Antiviral defense</keyword>
<keyword id="KW-0238">DNA-binding</keyword>
<keyword id="KW-0255">Endonuclease</keyword>
<keyword id="KW-0378">Hydrolase</keyword>
<keyword id="KW-0460">Magnesium</keyword>
<keyword id="KW-0464">Manganese</keyword>
<keyword id="KW-0479">Metal-binding</keyword>
<keyword id="KW-0540">Nuclease</keyword>
<keyword id="KW-1185">Reference proteome</keyword>
<feature type="chain" id="PRO_0000417073" description="CRISPR-associated endonuclease Cas1 1">
    <location>
        <begin position="1"/>
        <end position="343"/>
    </location>
</feature>
<feature type="binding site" evidence="1">
    <location>
        <position position="166"/>
    </location>
    <ligand>
        <name>Mn(2+)</name>
        <dbReference type="ChEBI" id="CHEBI:29035"/>
    </ligand>
</feature>
<feature type="binding site" evidence="1">
    <location>
        <position position="234"/>
    </location>
    <ligand>
        <name>Mn(2+)</name>
        <dbReference type="ChEBI" id="CHEBI:29035"/>
    </ligand>
</feature>
<feature type="binding site" evidence="1">
    <location>
        <position position="249"/>
    </location>
    <ligand>
        <name>Mn(2+)</name>
        <dbReference type="ChEBI" id="CHEBI:29035"/>
    </ligand>
</feature>
<comment type="function">
    <text evidence="1">CRISPR (clustered regularly interspaced short palindromic repeat), is an adaptive immune system that provides protection against mobile genetic elements (viruses, transposable elements and conjugative plasmids). CRISPR clusters contain spacers, sequences complementary to antecedent mobile elements, and target invading nucleic acids. CRISPR clusters are transcribed and processed into CRISPR RNA (crRNA). Acts as a dsDNA endonuclease. Involved in the integration of spacer DNA into the CRISPR cassette.</text>
</comment>
<comment type="cofactor">
    <cofactor evidence="1">
        <name>Mg(2+)</name>
        <dbReference type="ChEBI" id="CHEBI:18420"/>
    </cofactor>
    <cofactor evidence="1">
        <name>Mn(2+)</name>
        <dbReference type="ChEBI" id="CHEBI:29035"/>
    </cofactor>
</comment>
<comment type="subunit">
    <text evidence="1">Homodimer, forms a heterotetramer with a Cas2 homodimer.</text>
</comment>
<comment type="similarity">
    <text evidence="1">Belongs to the CRISPR-associated endonuclease Cas1 family.</text>
</comment>
<evidence type="ECO:0000255" key="1">
    <source>
        <dbReference type="HAMAP-Rule" id="MF_01470"/>
    </source>
</evidence>
<gene>
    <name evidence="1" type="primary">cas1-1</name>
    <name type="ordered locus">CT1130</name>
</gene>
<proteinExistence type="inferred from homology"/>
<organism>
    <name type="scientific">Chlorobaculum tepidum (strain ATCC 49652 / DSM 12025 / NBRC 103806 / TLS)</name>
    <name type="common">Chlorobium tepidum</name>
    <dbReference type="NCBI Taxonomy" id="194439"/>
    <lineage>
        <taxon>Bacteria</taxon>
        <taxon>Pseudomonadati</taxon>
        <taxon>Chlorobiota</taxon>
        <taxon>Chlorobiia</taxon>
        <taxon>Chlorobiales</taxon>
        <taxon>Chlorobiaceae</taxon>
        <taxon>Chlorobaculum</taxon>
    </lineage>
</organism>
<sequence>MKKHLNTLFVTTQGSYLSKEGECVLISIDRVEKTRIPLHMLNGIVCFGQVSCSPFLLGHCAQLGVAVTFLTEHGRFLCQMQGPVKGNILLRRAQYRMADNYDQTATLARLFVIGKIGNARVTLARALRDHPEKTDGEKLKNAQHVLAGCIRRLQEATDQELIRGIEGEAAKAYFSVFDECITADDPAFRFEGRSRRPPLDRVNCLLSFVYTLMTHDIRSALESCGLDPAAGFLHKDRPGRPSLALDMLEEFRSYIGDRLVLSLINRGQIHAKDFDISETGAVAMKDDARKTLITAYQQRKQEEIEHPFVGEKMAVGLLWHMQAMLLARYIRGDIDMYPPFVWR</sequence>
<dbReference type="EC" id="3.1.-.-" evidence="1"/>
<dbReference type="EMBL" id="AE006470">
    <property type="protein sequence ID" value="AAM72363.1"/>
    <property type="molecule type" value="Genomic_DNA"/>
</dbReference>
<dbReference type="RefSeq" id="NP_662021.1">
    <property type="nucleotide sequence ID" value="NC_002932.3"/>
</dbReference>
<dbReference type="RefSeq" id="WP_010932802.1">
    <property type="nucleotide sequence ID" value="NC_002932.3"/>
</dbReference>
<dbReference type="SMR" id="Q8KDC4"/>
<dbReference type="STRING" id="194439.CT1130"/>
<dbReference type="EnsemblBacteria" id="AAM72363">
    <property type="protein sequence ID" value="AAM72363"/>
    <property type="gene ID" value="CT1130"/>
</dbReference>
<dbReference type="KEGG" id="cte:CT1130"/>
<dbReference type="PATRIC" id="fig|194439.7.peg.1029"/>
<dbReference type="eggNOG" id="COG1518">
    <property type="taxonomic scope" value="Bacteria"/>
</dbReference>
<dbReference type="HOGENOM" id="CLU_052779_1_0_10"/>
<dbReference type="OrthoDB" id="9803119at2"/>
<dbReference type="Proteomes" id="UP000001007">
    <property type="component" value="Chromosome"/>
</dbReference>
<dbReference type="GO" id="GO:0003677">
    <property type="term" value="F:DNA binding"/>
    <property type="evidence" value="ECO:0007669"/>
    <property type="project" value="UniProtKB-KW"/>
</dbReference>
<dbReference type="GO" id="GO:0004520">
    <property type="term" value="F:DNA endonuclease activity"/>
    <property type="evidence" value="ECO:0007669"/>
    <property type="project" value="InterPro"/>
</dbReference>
<dbReference type="GO" id="GO:0046872">
    <property type="term" value="F:metal ion binding"/>
    <property type="evidence" value="ECO:0007669"/>
    <property type="project" value="UniProtKB-UniRule"/>
</dbReference>
<dbReference type="GO" id="GO:0051607">
    <property type="term" value="P:defense response to virus"/>
    <property type="evidence" value="ECO:0007669"/>
    <property type="project" value="UniProtKB-UniRule"/>
</dbReference>
<dbReference type="GO" id="GO:0043571">
    <property type="term" value="P:maintenance of CRISPR repeat elements"/>
    <property type="evidence" value="ECO:0007669"/>
    <property type="project" value="UniProtKB-UniRule"/>
</dbReference>
<dbReference type="CDD" id="cd09721">
    <property type="entry name" value="Cas1_I-C"/>
    <property type="match status" value="1"/>
</dbReference>
<dbReference type="Gene3D" id="1.20.120.920">
    <property type="entry name" value="CRISPR-associated endonuclease Cas1, C-terminal domain"/>
    <property type="match status" value="1"/>
</dbReference>
<dbReference type="Gene3D" id="3.100.10.20">
    <property type="entry name" value="CRISPR-associated endonuclease Cas1, N-terminal domain"/>
    <property type="match status" value="1"/>
</dbReference>
<dbReference type="HAMAP" id="MF_01470">
    <property type="entry name" value="Cas1"/>
    <property type="match status" value="1"/>
</dbReference>
<dbReference type="InterPro" id="IPR050646">
    <property type="entry name" value="Cas1"/>
</dbReference>
<dbReference type="InterPro" id="IPR002729">
    <property type="entry name" value="CRISPR-assoc_Cas1"/>
</dbReference>
<dbReference type="InterPro" id="IPR042206">
    <property type="entry name" value="CRISPR-assoc_Cas1_C"/>
</dbReference>
<dbReference type="InterPro" id="IPR019856">
    <property type="entry name" value="CRISPR-assoc_Cas1_DVULG"/>
</dbReference>
<dbReference type="InterPro" id="IPR042211">
    <property type="entry name" value="CRISPR-assoc_Cas1_N"/>
</dbReference>
<dbReference type="NCBIfam" id="TIGR00287">
    <property type="entry name" value="cas1"/>
    <property type="match status" value="1"/>
</dbReference>
<dbReference type="NCBIfam" id="TIGR03640">
    <property type="entry name" value="cas1_DVULG"/>
    <property type="match status" value="1"/>
</dbReference>
<dbReference type="PANTHER" id="PTHR34353">
    <property type="entry name" value="CRISPR-ASSOCIATED ENDONUCLEASE CAS1 1"/>
    <property type="match status" value="1"/>
</dbReference>
<dbReference type="PANTHER" id="PTHR34353:SF2">
    <property type="entry name" value="CRISPR-ASSOCIATED ENDONUCLEASE CAS1 1"/>
    <property type="match status" value="1"/>
</dbReference>
<dbReference type="Pfam" id="PF01867">
    <property type="entry name" value="Cas_Cas1"/>
    <property type="match status" value="1"/>
</dbReference>
<protein>
    <recommendedName>
        <fullName evidence="1">CRISPR-associated endonuclease Cas1 1</fullName>
        <ecNumber evidence="1">3.1.-.-</ecNumber>
    </recommendedName>
</protein>
<name>CAS1A_CHLTE</name>
<reference key="1">
    <citation type="journal article" date="2002" name="Proc. Natl. Acad. Sci. U.S.A.">
        <title>The complete genome sequence of Chlorobium tepidum TLS, a photosynthetic, anaerobic, green-sulfur bacterium.</title>
        <authorList>
            <person name="Eisen J.A."/>
            <person name="Nelson K.E."/>
            <person name="Paulsen I.T."/>
            <person name="Heidelberg J.F."/>
            <person name="Wu M."/>
            <person name="Dodson R.J."/>
            <person name="DeBoy R.T."/>
            <person name="Gwinn M.L."/>
            <person name="Nelson W.C."/>
            <person name="Haft D.H."/>
            <person name="Hickey E.K."/>
            <person name="Peterson J.D."/>
            <person name="Durkin A.S."/>
            <person name="Kolonay J.F."/>
            <person name="Yang F."/>
            <person name="Holt I.E."/>
            <person name="Umayam L.A."/>
            <person name="Mason T.M."/>
            <person name="Brenner M."/>
            <person name="Shea T.P."/>
            <person name="Parksey D.S."/>
            <person name="Nierman W.C."/>
            <person name="Feldblyum T.V."/>
            <person name="Hansen C.L."/>
            <person name="Craven M.B."/>
            <person name="Radune D."/>
            <person name="Vamathevan J.J."/>
            <person name="Khouri H.M."/>
            <person name="White O."/>
            <person name="Gruber T.M."/>
            <person name="Ketchum K.A."/>
            <person name="Venter J.C."/>
            <person name="Tettelin H."/>
            <person name="Bryant D.A."/>
            <person name="Fraser C.M."/>
        </authorList>
    </citation>
    <scope>NUCLEOTIDE SEQUENCE [LARGE SCALE GENOMIC DNA]</scope>
    <source>
        <strain>ATCC 49652 / DSM 12025 / NBRC 103806 / TLS</strain>
    </source>
</reference>
<accession>Q8KDC4</accession>